<gene>
    <name evidence="1" type="primary">dnaJ</name>
    <name type="ordered locus">CHY_0416</name>
</gene>
<reference key="1">
    <citation type="journal article" date="2005" name="PLoS Genet.">
        <title>Life in hot carbon monoxide: the complete genome sequence of Carboxydothermus hydrogenoformans Z-2901.</title>
        <authorList>
            <person name="Wu M."/>
            <person name="Ren Q."/>
            <person name="Durkin A.S."/>
            <person name="Daugherty S.C."/>
            <person name="Brinkac L.M."/>
            <person name="Dodson R.J."/>
            <person name="Madupu R."/>
            <person name="Sullivan S.A."/>
            <person name="Kolonay J.F."/>
            <person name="Nelson W.C."/>
            <person name="Tallon L.J."/>
            <person name="Jones K.M."/>
            <person name="Ulrich L.E."/>
            <person name="Gonzalez J.M."/>
            <person name="Zhulin I.B."/>
            <person name="Robb F.T."/>
            <person name="Eisen J.A."/>
        </authorList>
    </citation>
    <scope>NUCLEOTIDE SEQUENCE [LARGE SCALE GENOMIC DNA]</scope>
    <source>
        <strain>ATCC BAA-161 / DSM 6008 / Z-2901</strain>
    </source>
</reference>
<feature type="chain" id="PRO_1000085171" description="Chaperone protein DnaJ">
    <location>
        <begin position="1"/>
        <end position="381"/>
    </location>
</feature>
<feature type="domain" description="J" evidence="1">
    <location>
        <begin position="4"/>
        <end position="69"/>
    </location>
</feature>
<feature type="repeat" description="CXXCXGXG motif">
    <location>
        <begin position="152"/>
        <end position="159"/>
    </location>
</feature>
<feature type="repeat" description="CXXCXGXG motif">
    <location>
        <begin position="169"/>
        <end position="176"/>
    </location>
</feature>
<feature type="repeat" description="CXXCXGXG motif">
    <location>
        <begin position="195"/>
        <end position="202"/>
    </location>
</feature>
<feature type="repeat" description="CXXCXGXG motif">
    <location>
        <begin position="209"/>
        <end position="216"/>
    </location>
</feature>
<feature type="zinc finger region" description="CR-type" evidence="1">
    <location>
        <begin position="139"/>
        <end position="221"/>
    </location>
</feature>
<feature type="binding site" evidence="1">
    <location>
        <position position="152"/>
    </location>
    <ligand>
        <name>Zn(2+)</name>
        <dbReference type="ChEBI" id="CHEBI:29105"/>
        <label>1</label>
    </ligand>
</feature>
<feature type="binding site" evidence="1">
    <location>
        <position position="155"/>
    </location>
    <ligand>
        <name>Zn(2+)</name>
        <dbReference type="ChEBI" id="CHEBI:29105"/>
        <label>1</label>
    </ligand>
</feature>
<feature type="binding site" evidence="1">
    <location>
        <position position="169"/>
    </location>
    <ligand>
        <name>Zn(2+)</name>
        <dbReference type="ChEBI" id="CHEBI:29105"/>
        <label>2</label>
    </ligand>
</feature>
<feature type="binding site" evidence="1">
    <location>
        <position position="172"/>
    </location>
    <ligand>
        <name>Zn(2+)</name>
        <dbReference type="ChEBI" id="CHEBI:29105"/>
        <label>2</label>
    </ligand>
</feature>
<feature type="binding site" evidence="1">
    <location>
        <position position="195"/>
    </location>
    <ligand>
        <name>Zn(2+)</name>
        <dbReference type="ChEBI" id="CHEBI:29105"/>
        <label>2</label>
    </ligand>
</feature>
<feature type="binding site" evidence="1">
    <location>
        <position position="198"/>
    </location>
    <ligand>
        <name>Zn(2+)</name>
        <dbReference type="ChEBI" id="CHEBI:29105"/>
        <label>2</label>
    </ligand>
</feature>
<feature type="binding site" evidence="1">
    <location>
        <position position="209"/>
    </location>
    <ligand>
        <name>Zn(2+)</name>
        <dbReference type="ChEBI" id="CHEBI:29105"/>
        <label>1</label>
    </ligand>
</feature>
<feature type="binding site" evidence="1">
    <location>
        <position position="212"/>
    </location>
    <ligand>
        <name>Zn(2+)</name>
        <dbReference type="ChEBI" id="CHEBI:29105"/>
        <label>1</label>
    </ligand>
</feature>
<evidence type="ECO:0000255" key="1">
    <source>
        <dbReference type="HAMAP-Rule" id="MF_01152"/>
    </source>
</evidence>
<accession>Q3AF07</accession>
<name>DNAJ_CARHZ</name>
<proteinExistence type="inferred from homology"/>
<sequence>MKRDYYEILGVARNATPEEIKKAYRKLARKYHPDVNKDDPNAAEKFKEINEAYEVLSDPEKRARYDQFGHAGVDGNFAGQGGFGGGAGINFEDIFSGFGGFGDLFDMVFGSGRKARQGPVPGDDIEAVLELTLEEAVFGGEKELRVTRTETCGHCHGNGAEPGTPIITCPTCQGRGQIHQEVKTLFGRMVRSQVCSTCRGEGKIPKTPCRECGGSGLVRKTRSITVKIPPGIDHGHRLRIAGGGEAGRFGGPPGDLYVYIKIKPHKLFKREDIHLKLEKEISFVQAALGAKVEIPTIDGGTEILEIPEGTQTGTVFTIKGKGVPVVNGSGRGNLYVTVKVVTPTKLTERQKQLLREFEEISKQKEETFKEKFNKFKNKFAL</sequence>
<dbReference type="EMBL" id="CP000141">
    <property type="protein sequence ID" value="ABB15229.1"/>
    <property type="molecule type" value="Genomic_DNA"/>
</dbReference>
<dbReference type="RefSeq" id="WP_011343353.1">
    <property type="nucleotide sequence ID" value="NC_007503.1"/>
</dbReference>
<dbReference type="SMR" id="Q3AF07"/>
<dbReference type="FunCoup" id="Q3AF07">
    <property type="interactions" value="457"/>
</dbReference>
<dbReference type="STRING" id="246194.CHY_0416"/>
<dbReference type="KEGG" id="chy:CHY_0416"/>
<dbReference type="eggNOG" id="COG0484">
    <property type="taxonomic scope" value="Bacteria"/>
</dbReference>
<dbReference type="HOGENOM" id="CLU_017633_0_7_9"/>
<dbReference type="InParanoid" id="Q3AF07"/>
<dbReference type="OrthoDB" id="9779889at2"/>
<dbReference type="Proteomes" id="UP000002706">
    <property type="component" value="Chromosome"/>
</dbReference>
<dbReference type="GO" id="GO:0005737">
    <property type="term" value="C:cytoplasm"/>
    <property type="evidence" value="ECO:0007669"/>
    <property type="project" value="UniProtKB-SubCell"/>
</dbReference>
<dbReference type="GO" id="GO:0005524">
    <property type="term" value="F:ATP binding"/>
    <property type="evidence" value="ECO:0007669"/>
    <property type="project" value="InterPro"/>
</dbReference>
<dbReference type="GO" id="GO:0031072">
    <property type="term" value="F:heat shock protein binding"/>
    <property type="evidence" value="ECO:0007669"/>
    <property type="project" value="InterPro"/>
</dbReference>
<dbReference type="GO" id="GO:0051082">
    <property type="term" value="F:unfolded protein binding"/>
    <property type="evidence" value="ECO:0007669"/>
    <property type="project" value="UniProtKB-UniRule"/>
</dbReference>
<dbReference type="GO" id="GO:0008270">
    <property type="term" value="F:zinc ion binding"/>
    <property type="evidence" value="ECO:0007669"/>
    <property type="project" value="UniProtKB-UniRule"/>
</dbReference>
<dbReference type="GO" id="GO:0051085">
    <property type="term" value="P:chaperone cofactor-dependent protein refolding"/>
    <property type="evidence" value="ECO:0007669"/>
    <property type="project" value="TreeGrafter"/>
</dbReference>
<dbReference type="GO" id="GO:0006260">
    <property type="term" value="P:DNA replication"/>
    <property type="evidence" value="ECO:0007669"/>
    <property type="project" value="UniProtKB-KW"/>
</dbReference>
<dbReference type="GO" id="GO:0042026">
    <property type="term" value="P:protein refolding"/>
    <property type="evidence" value="ECO:0007669"/>
    <property type="project" value="TreeGrafter"/>
</dbReference>
<dbReference type="GO" id="GO:0009408">
    <property type="term" value="P:response to heat"/>
    <property type="evidence" value="ECO:0007669"/>
    <property type="project" value="InterPro"/>
</dbReference>
<dbReference type="CDD" id="cd06257">
    <property type="entry name" value="DnaJ"/>
    <property type="match status" value="1"/>
</dbReference>
<dbReference type="CDD" id="cd10747">
    <property type="entry name" value="DnaJ_C"/>
    <property type="match status" value="1"/>
</dbReference>
<dbReference type="CDD" id="cd10719">
    <property type="entry name" value="DnaJ_zf"/>
    <property type="match status" value="1"/>
</dbReference>
<dbReference type="FunFam" id="1.10.287.110:FF:000034">
    <property type="entry name" value="Chaperone protein DnaJ"/>
    <property type="match status" value="1"/>
</dbReference>
<dbReference type="FunFam" id="2.10.230.10:FF:000002">
    <property type="entry name" value="Molecular chaperone DnaJ"/>
    <property type="match status" value="1"/>
</dbReference>
<dbReference type="FunFam" id="2.60.260.20:FF:000004">
    <property type="entry name" value="Molecular chaperone DnaJ"/>
    <property type="match status" value="1"/>
</dbReference>
<dbReference type="Gene3D" id="1.10.287.110">
    <property type="entry name" value="DnaJ domain"/>
    <property type="match status" value="1"/>
</dbReference>
<dbReference type="Gene3D" id="2.10.230.10">
    <property type="entry name" value="Heat shock protein DnaJ, cysteine-rich domain"/>
    <property type="match status" value="1"/>
</dbReference>
<dbReference type="Gene3D" id="2.60.260.20">
    <property type="entry name" value="Urease metallochaperone UreE, N-terminal domain"/>
    <property type="match status" value="2"/>
</dbReference>
<dbReference type="HAMAP" id="MF_01152">
    <property type="entry name" value="DnaJ"/>
    <property type="match status" value="1"/>
</dbReference>
<dbReference type="InterPro" id="IPR012724">
    <property type="entry name" value="DnaJ"/>
</dbReference>
<dbReference type="InterPro" id="IPR002939">
    <property type="entry name" value="DnaJ_C"/>
</dbReference>
<dbReference type="InterPro" id="IPR001623">
    <property type="entry name" value="DnaJ_domain"/>
</dbReference>
<dbReference type="InterPro" id="IPR018253">
    <property type="entry name" value="DnaJ_domain_CS"/>
</dbReference>
<dbReference type="InterPro" id="IPR008971">
    <property type="entry name" value="HSP40/DnaJ_pept-bd"/>
</dbReference>
<dbReference type="InterPro" id="IPR001305">
    <property type="entry name" value="HSP_DnaJ_Cys-rich_dom"/>
</dbReference>
<dbReference type="InterPro" id="IPR036410">
    <property type="entry name" value="HSP_DnaJ_Cys-rich_dom_sf"/>
</dbReference>
<dbReference type="InterPro" id="IPR036869">
    <property type="entry name" value="J_dom_sf"/>
</dbReference>
<dbReference type="NCBIfam" id="TIGR02349">
    <property type="entry name" value="DnaJ_bact"/>
    <property type="match status" value="1"/>
</dbReference>
<dbReference type="NCBIfam" id="NF008035">
    <property type="entry name" value="PRK10767.1"/>
    <property type="match status" value="1"/>
</dbReference>
<dbReference type="PANTHER" id="PTHR43096:SF48">
    <property type="entry name" value="CHAPERONE PROTEIN DNAJ"/>
    <property type="match status" value="1"/>
</dbReference>
<dbReference type="PANTHER" id="PTHR43096">
    <property type="entry name" value="DNAJ HOMOLOG 1, MITOCHONDRIAL-RELATED"/>
    <property type="match status" value="1"/>
</dbReference>
<dbReference type="Pfam" id="PF00226">
    <property type="entry name" value="DnaJ"/>
    <property type="match status" value="1"/>
</dbReference>
<dbReference type="Pfam" id="PF01556">
    <property type="entry name" value="DnaJ_C"/>
    <property type="match status" value="1"/>
</dbReference>
<dbReference type="Pfam" id="PF00684">
    <property type="entry name" value="DnaJ_CXXCXGXG"/>
    <property type="match status" value="1"/>
</dbReference>
<dbReference type="PRINTS" id="PR00625">
    <property type="entry name" value="JDOMAIN"/>
</dbReference>
<dbReference type="SMART" id="SM00271">
    <property type="entry name" value="DnaJ"/>
    <property type="match status" value="1"/>
</dbReference>
<dbReference type="SUPFAM" id="SSF46565">
    <property type="entry name" value="Chaperone J-domain"/>
    <property type="match status" value="1"/>
</dbReference>
<dbReference type="SUPFAM" id="SSF57938">
    <property type="entry name" value="DnaJ/Hsp40 cysteine-rich domain"/>
    <property type="match status" value="1"/>
</dbReference>
<dbReference type="SUPFAM" id="SSF49493">
    <property type="entry name" value="HSP40/DnaJ peptide-binding domain"/>
    <property type="match status" value="2"/>
</dbReference>
<dbReference type="PROSITE" id="PS00636">
    <property type="entry name" value="DNAJ_1"/>
    <property type="match status" value="1"/>
</dbReference>
<dbReference type="PROSITE" id="PS50076">
    <property type="entry name" value="DNAJ_2"/>
    <property type="match status" value="1"/>
</dbReference>
<dbReference type="PROSITE" id="PS51188">
    <property type="entry name" value="ZF_CR"/>
    <property type="match status" value="1"/>
</dbReference>
<protein>
    <recommendedName>
        <fullName evidence="1">Chaperone protein DnaJ</fullName>
    </recommendedName>
</protein>
<keyword id="KW-0143">Chaperone</keyword>
<keyword id="KW-0963">Cytoplasm</keyword>
<keyword id="KW-0235">DNA replication</keyword>
<keyword id="KW-0479">Metal-binding</keyword>
<keyword id="KW-1185">Reference proteome</keyword>
<keyword id="KW-0677">Repeat</keyword>
<keyword id="KW-0346">Stress response</keyword>
<keyword id="KW-0862">Zinc</keyword>
<keyword id="KW-0863">Zinc-finger</keyword>
<organism>
    <name type="scientific">Carboxydothermus hydrogenoformans (strain ATCC BAA-161 / DSM 6008 / Z-2901)</name>
    <dbReference type="NCBI Taxonomy" id="246194"/>
    <lineage>
        <taxon>Bacteria</taxon>
        <taxon>Bacillati</taxon>
        <taxon>Bacillota</taxon>
        <taxon>Clostridia</taxon>
        <taxon>Thermoanaerobacterales</taxon>
        <taxon>Thermoanaerobacteraceae</taxon>
        <taxon>Carboxydothermus</taxon>
    </lineage>
</organism>
<comment type="function">
    <text evidence="1">Participates actively in the response to hyperosmotic and heat shock by preventing the aggregation of stress-denatured proteins and by disaggregating proteins, also in an autonomous, DnaK-independent fashion. Unfolded proteins bind initially to DnaJ; upon interaction with the DnaJ-bound protein, DnaK hydrolyzes its bound ATP, resulting in the formation of a stable complex. GrpE releases ADP from DnaK; ATP binding to DnaK triggers the release of the substrate protein, thus completing the reaction cycle. Several rounds of ATP-dependent interactions between DnaJ, DnaK and GrpE are required for fully efficient folding. Also involved, together with DnaK and GrpE, in the DNA replication of plasmids through activation of initiation proteins.</text>
</comment>
<comment type="cofactor">
    <cofactor evidence="1">
        <name>Zn(2+)</name>
        <dbReference type="ChEBI" id="CHEBI:29105"/>
    </cofactor>
    <text evidence="1">Binds 2 Zn(2+) ions per monomer.</text>
</comment>
<comment type="subunit">
    <text evidence="1">Homodimer.</text>
</comment>
<comment type="subcellular location">
    <subcellularLocation>
        <location evidence="1">Cytoplasm</location>
    </subcellularLocation>
</comment>
<comment type="domain">
    <text evidence="1">The J domain is necessary and sufficient to stimulate DnaK ATPase activity. Zinc center 1 plays an important role in the autonomous, DnaK-independent chaperone activity of DnaJ. Zinc center 2 is essential for interaction with DnaK and for DnaJ activity.</text>
</comment>
<comment type="similarity">
    <text evidence="1">Belongs to the DnaJ family.</text>
</comment>